<proteinExistence type="evidence at protein level"/>
<name>LL2_LASLA</name>
<sequence length="15" mass="1738">VNWKKILGKIIKVAK</sequence>
<dbReference type="GO" id="GO:0005576">
    <property type="term" value="C:extracellular region"/>
    <property type="evidence" value="ECO:0007669"/>
    <property type="project" value="UniProtKB-SubCell"/>
</dbReference>
<dbReference type="GO" id="GO:0003677">
    <property type="term" value="F:DNA binding"/>
    <property type="evidence" value="ECO:0007669"/>
    <property type="project" value="UniProtKB-KW"/>
</dbReference>
<dbReference type="GO" id="GO:0042742">
    <property type="term" value="P:defense response to bacterium"/>
    <property type="evidence" value="ECO:0007669"/>
    <property type="project" value="UniProtKB-KW"/>
</dbReference>
<reference evidence="5" key="1">
    <citation type="journal article" date="2009" name="ChemBioChem">
        <title>Lasioglossins: three novel antimicrobial peptides from the venom of the eusocial bee Lasioglossum laticeps (Hymenoptera: Halictidae).</title>
        <authorList>
            <person name="Cerovsky V."/>
            <person name="Budesinsky M."/>
            <person name="Hovorka O."/>
            <person name="Cvacka J."/>
            <person name="Voburka Z."/>
            <person name="Slaninova J."/>
            <person name="Borovickova L."/>
            <person name="Fucik V."/>
            <person name="Bednarova L."/>
            <person name="Votruba I."/>
            <person name="Straka J."/>
        </authorList>
    </citation>
    <scope>PROTEIN SEQUENCE</scope>
    <scope>FUNCTION</scope>
    <scope>SUBCELLULAR LOCATION</scope>
    <scope>MASS SPECTROMETRY</scope>
    <scope>IDENTIFICATION BY MASS SPECTROMETRY</scope>
    <scope>STRUCTURE BY NMR</scope>
    <scope>MUTAGENESIS OF 1-VAL-ASN-2 AND GLY-8</scope>
    <scope>AMIDATION AT LYS-15</scope>
    <source>
        <tissue evidence="4">Venom</tissue>
    </source>
</reference>
<reference key="2">
    <citation type="journal article" date="2022" name="Toxins">
        <title>The pharmacological potential of novel melittin variants from the honeybee and solitary bees against inflammation and cancer.</title>
        <authorList>
            <person name="Erkoc P."/>
            <person name="von Reumont B.M."/>
            <person name="Lueddecke T."/>
            <person name="Henke M."/>
            <person name="Ulshoefer T."/>
            <person name="Vilcinskas A."/>
            <person name="Fuerst R."/>
            <person name="Schiffmann S."/>
        </authorList>
    </citation>
    <scope>FUNCTION OF 3-RESIDUES C-TERMINALLY TRUNCATED PEPTIDE</scope>
</reference>
<reference evidence="5" key="3">
    <citation type="journal article" date="2013" name="Biochem. Biophys. Res. Commun.">
        <title>Model membrane interaction and DNA-binding of antimicrobial peptide Lasioglossin II derived from bee venom.</title>
        <authorList>
            <person name="Bandyopadhyay S."/>
            <person name="Lee M."/>
            <person name="Sivaraman J."/>
            <person name="Chatterjee C."/>
        </authorList>
    </citation>
    <scope>STRUCTURE BY NMR IN COMPLEX WITH DPC MICELLES</scope>
    <scope>FUNCTION</scope>
</reference>
<protein>
    <recommendedName>
        <fullName evidence="4">Lasioglossin-2</fullName>
        <shortName evidence="4">LL-II</shortName>
    </recommendedName>
</protein>
<organism evidence="4">
    <name type="scientific">Lasioglossum laticeps</name>
    <name type="common">Bee</name>
    <dbReference type="NCBI Taxonomy" id="88510"/>
    <lineage>
        <taxon>Eukaryota</taxon>
        <taxon>Metazoa</taxon>
        <taxon>Ecdysozoa</taxon>
        <taxon>Arthropoda</taxon>
        <taxon>Hexapoda</taxon>
        <taxon>Insecta</taxon>
        <taxon>Pterygota</taxon>
        <taxon>Neoptera</taxon>
        <taxon>Endopterygota</taxon>
        <taxon>Hymenoptera</taxon>
        <taxon>Apocrita</taxon>
        <taxon>Aculeata</taxon>
        <taxon>Apoidea</taxon>
        <taxon>Anthophila</taxon>
        <taxon>Halictidae</taxon>
        <taxon>Halictinae</taxon>
        <taxon>Halictini</taxon>
        <taxon>Lasioglossum</taxon>
        <taxon>Evylaeus</taxon>
    </lineage>
</organism>
<accession>C0HK43</accession>
<evidence type="ECO:0000250" key="1">
    <source>
        <dbReference type="UniProtKB" id="C0HK44"/>
    </source>
</evidence>
<evidence type="ECO:0000269" key="2">
    <source>
    </source>
</evidence>
<evidence type="ECO:0000269" key="3">
    <source>
    </source>
</evidence>
<evidence type="ECO:0000303" key="4">
    <source>
    </source>
</evidence>
<evidence type="ECO:0000305" key="5"/>
<evidence type="ECO:0000305" key="6">
    <source>
    </source>
</evidence>
<comment type="function">
    <text evidence="1 2 3">Antimicrobial peptide which assumes an amphiphilic alpha-helix conformation upon contact with membranes (PubMed:19591185, PubMed:23159628). Insertion into membranes involves Trp-3 (PubMed:23159628). Penetrates into cells once membrane has been permeated (By similarity). Active against Gram-negative bacteria E.coli (MIC=1.4 uM), P.aeruginosa (MIC=14.4 uM) and Gram-positive bacteria S.aureus (MIC=9.0 uM) and B.subtilis (MIC=0.7 uM) (PubMed:19591185). Has cytotoxic but no hemolytic activity (PubMed:19591185). Binds DNA in vitro (PubMed:23159628). In the context of inflammation and cancer tests, a 3-residues C-terminally truncated lasioglossin-2 is weakly cytotoxic to normal cells, induces calcium signaling but does not impact cAMP production (PubMed:36548715). In addition, this truncated peptide prevents LPS-induced nitric oxid (NO) synthesis but does not affect the IP3 signaling and pro-inflammatory activation of endothelial cells (PubMed:36548715). This truncated peptide does not show significant antiproliferative activity on the breast cancer cell line MDA-MB-231 (PubMed:36548715).</text>
</comment>
<comment type="subcellular location">
    <subcellularLocation>
        <location evidence="2">Secreted</location>
    </subcellularLocation>
</comment>
<comment type="tissue specificity">
    <text evidence="6">Expressed by the venom gland.</text>
</comment>
<comment type="PTM">
    <text evidence="1">The C-terminal amidation is required for full activity.</text>
</comment>
<comment type="mass spectrometry" mass="1736.1" error="0.1" method="Electrospray" evidence="2"/>
<comment type="similarity">
    <text evidence="5">Belongs to the lasioglossin-like family.</text>
</comment>
<feature type="peptide" id="PRO_0000437651" description="Lasioglossin-2" evidence="2">
    <location>
        <begin position="1"/>
        <end position="15"/>
    </location>
</feature>
<feature type="modified residue" description="Lysine amide" evidence="2">
    <location>
        <position position="15"/>
    </location>
</feature>
<feature type="mutagenesis site" description="Slightly increased activity against E.coli, reduced activity against S.aureus and P.aeruginosa." evidence="2">
    <original>VN</original>
    <variation>NV</variation>
    <location>
        <begin position="1"/>
        <end position="2"/>
    </location>
</feature>
<feature type="mutagenesis site" description="Slightly increased activity against S.aureus and E.coli, reduced activity against P.aeruginosa. Shows hemolytic activity." evidence="2">
    <original>G</original>
    <variation>A</variation>
    <location>
        <position position="8"/>
    </location>
</feature>
<feature type="mutagenesis site" description="Slightly increased activity against E.coli, reduced activity against S.aureus and P.aeruginosa. Shows hemolytic activity." evidence="2">
    <original>G</original>
    <variation>K</variation>
    <location>
        <position position="8"/>
    </location>
</feature>
<feature type="mutagenesis site" description="Reduced antimicrobial activity." evidence="2">
    <original>G</original>
    <variation>P</variation>
    <location>
        <position position="8"/>
    </location>
</feature>
<keyword id="KW-0027">Amidation</keyword>
<keyword id="KW-0044">Antibiotic</keyword>
<keyword id="KW-0929">Antimicrobial</keyword>
<keyword id="KW-0903">Direct protein sequencing</keyword>
<keyword id="KW-0238">DNA-binding</keyword>
<keyword id="KW-0964">Secreted</keyword>